<reference key="1">
    <citation type="submission" date="2007-12" db="EMBL/GenBank/DDBJ databases">
        <title>Complete sequence of chromosome of Francisella philomiragia subsp. philomiragia ATCC 25017.</title>
        <authorList>
            <consortium name="US DOE Joint Genome Institute"/>
            <person name="Copeland A."/>
            <person name="Lucas S."/>
            <person name="Lapidus A."/>
            <person name="Barry K."/>
            <person name="Detter J.C."/>
            <person name="Glavina del Rio T."/>
            <person name="Hammon N."/>
            <person name="Israni S."/>
            <person name="Dalin E."/>
            <person name="Tice H."/>
            <person name="Pitluck S."/>
            <person name="Chain P."/>
            <person name="Malfatti S."/>
            <person name="Shin M."/>
            <person name="Vergez L."/>
            <person name="Schmutz J."/>
            <person name="Larimer F."/>
            <person name="Land M."/>
            <person name="Hauser L."/>
            <person name="Richardson P."/>
        </authorList>
    </citation>
    <scope>NUCLEOTIDE SEQUENCE [LARGE SCALE GENOMIC DNA]</scope>
    <source>
        <strain>ATCC 25017 / CCUG 19701 / FSC 153 / O#319-036</strain>
    </source>
</reference>
<accession>B0TYS6</accession>
<sequence>MRTDDFDYKLPEELIASYPLENRDASRLLKLNKQTGEILDHKFTDFIDFINPEDLLIFNNSKVMLARLYGEKITGAKLEYLIERVKTPKIFETHIKANRSPAIGSEIYVQDTLAKILEKDGGMYLLELQGNKDIYQLMEEFGHIPLPPYMKRDDEEFDAERYQTVYAKDLGSVAAPTAGLHFSEELMQQIKAKGTDIAYITLHVGSGTFKPVQVDDVNNHKMHSEVISVSEDVCEKIRQTKANGGRVIAIGTTSVRSLETAGQSGEIQPYQGETDIFLYPGKKFNIVDAMITNFHLPKSTLIMLVSAFADKEKIMKAYEHAIAEKYRFFSYGDAMFIF</sequence>
<keyword id="KW-0963">Cytoplasm</keyword>
<keyword id="KW-0671">Queuosine biosynthesis</keyword>
<keyword id="KW-0949">S-adenosyl-L-methionine</keyword>
<keyword id="KW-0808">Transferase</keyword>
<proteinExistence type="inferred from homology"/>
<protein>
    <recommendedName>
        <fullName evidence="1">S-adenosylmethionine:tRNA ribosyltransferase-isomerase</fullName>
        <ecNumber evidence="1">2.4.99.17</ecNumber>
    </recommendedName>
    <alternativeName>
        <fullName evidence="1">Queuosine biosynthesis protein QueA</fullName>
    </alternativeName>
</protein>
<dbReference type="EC" id="2.4.99.17" evidence="1"/>
<dbReference type="EMBL" id="CP000937">
    <property type="protein sequence ID" value="ABZ87672.1"/>
    <property type="molecule type" value="Genomic_DNA"/>
</dbReference>
<dbReference type="SMR" id="B0TYS6"/>
<dbReference type="KEGG" id="fph:Fphi_1447"/>
<dbReference type="eggNOG" id="COG0809">
    <property type="taxonomic scope" value="Bacteria"/>
</dbReference>
<dbReference type="HOGENOM" id="CLU_039110_1_0_6"/>
<dbReference type="UniPathway" id="UPA00392"/>
<dbReference type="GO" id="GO:0005737">
    <property type="term" value="C:cytoplasm"/>
    <property type="evidence" value="ECO:0007669"/>
    <property type="project" value="UniProtKB-SubCell"/>
</dbReference>
<dbReference type="GO" id="GO:0051075">
    <property type="term" value="F:S-adenosylmethionine:tRNA ribosyltransferase-isomerase activity"/>
    <property type="evidence" value="ECO:0007669"/>
    <property type="project" value="UniProtKB-EC"/>
</dbReference>
<dbReference type="GO" id="GO:0008616">
    <property type="term" value="P:queuosine biosynthetic process"/>
    <property type="evidence" value="ECO:0007669"/>
    <property type="project" value="UniProtKB-UniRule"/>
</dbReference>
<dbReference type="GO" id="GO:0002099">
    <property type="term" value="P:tRNA wobble guanine modification"/>
    <property type="evidence" value="ECO:0007669"/>
    <property type="project" value="TreeGrafter"/>
</dbReference>
<dbReference type="FunFam" id="3.40.1780.10:FF:000001">
    <property type="entry name" value="S-adenosylmethionine:tRNA ribosyltransferase-isomerase"/>
    <property type="match status" value="1"/>
</dbReference>
<dbReference type="Gene3D" id="2.40.10.240">
    <property type="entry name" value="QueA-like"/>
    <property type="match status" value="1"/>
</dbReference>
<dbReference type="Gene3D" id="3.40.1780.10">
    <property type="entry name" value="QueA-like"/>
    <property type="match status" value="1"/>
</dbReference>
<dbReference type="HAMAP" id="MF_00113">
    <property type="entry name" value="QueA"/>
    <property type="match status" value="1"/>
</dbReference>
<dbReference type="InterPro" id="IPR003699">
    <property type="entry name" value="QueA"/>
</dbReference>
<dbReference type="InterPro" id="IPR042118">
    <property type="entry name" value="QueA_dom1"/>
</dbReference>
<dbReference type="InterPro" id="IPR042119">
    <property type="entry name" value="QueA_dom2"/>
</dbReference>
<dbReference type="InterPro" id="IPR036100">
    <property type="entry name" value="QueA_sf"/>
</dbReference>
<dbReference type="NCBIfam" id="NF001140">
    <property type="entry name" value="PRK00147.1"/>
    <property type="match status" value="1"/>
</dbReference>
<dbReference type="NCBIfam" id="TIGR00113">
    <property type="entry name" value="queA"/>
    <property type="match status" value="1"/>
</dbReference>
<dbReference type="PANTHER" id="PTHR30307">
    <property type="entry name" value="S-ADENOSYLMETHIONINE:TRNA RIBOSYLTRANSFERASE-ISOMERASE"/>
    <property type="match status" value="1"/>
</dbReference>
<dbReference type="PANTHER" id="PTHR30307:SF0">
    <property type="entry name" value="S-ADENOSYLMETHIONINE:TRNA RIBOSYLTRANSFERASE-ISOMERASE"/>
    <property type="match status" value="1"/>
</dbReference>
<dbReference type="Pfam" id="PF02547">
    <property type="entry name" value="Queuosine_synth"/>
    <property type="match status" value="1"/>
</dbReference>
<dbReference type="SUPFAM" id="SSF111337">
    <property type="entry name" value="QueA-like"/>
    <property type="match status" value="1"/>
</dbReference>
<organism>
    <name type="scientific">Francisella philomiragia subsp. philomiragia (strain ATCC 25017 / CCUG 19701 / FSC 153 / O#319-036)</name>
    <dbReference type="NCBI Taxonomy" id="484022"/>
    <lineage>
        <taxon>Bacteria</taxon>
        <taxon>Pseudomonadati</taxon>
        <taxon>Pseudomonadota</taxon>
        <taxon>Gammaproteobacteria</taxon>
        <taxon>Thiotrichales</taxon>
        <taxon>Francisellaceae</taxon>
        <taxon>Francisella</taxon>
    </lineage>
</organism>
<gene>
    <name evidence="1" type="primary">queA</name>
    <name type="ordered locus">Fphi_1447</name>
</gene>
<comment type="function">
    <text evidence="1">Transfers and isomerizes the ribose moiety from AdoMet to the 7-aminomethyl group of 7-deazaguanine (preQ1-tRNA) to give epoxyqueuosine (oQ-tRNA).</text>
</comment>
<comment type="catalytic activity">
    <reaction evidence="1">
        <text>7-aminomethyl-7-carbaguanosine(34) in tRNA + S-adenosyl-L-methionine = epoxyqueuosine(34) in tRNA + adenine + L-methionine + 2 H(+)</text>
        <dbReference type="Rhea" id="RHEA:32155"/>
        <dbReference type="Rhea" id="RHEA-COMP:10342"/>
        <dbReference type="Rhea" id="RHEA-COMP:18582"/>
        <dbReference type="ChEBI" id="CHEBI:15378"/>
        <dbReference type="ChEBI" id="CHEBI:16708"/>
        <dbReference type="ChEBI" id="CHEBI:57844"/>
        <dbReference type="ChEBI" id="CHEBI:59789"/>
        <dbReference type="ChEBI" id="CHEBI:82833"/>
        <dbReference type="ChEBI" id="CHEBI:194443"/>
        <dbReference type="EC" id="2.4.99.17"/>
    </reaction>
</comment>
<comment type="pathway">
    <text evidence="1">tRNA modification; tRNA-queuosine biosynthesis.</text>
</comment>
<comment type="subunit">
    <text evidence="1">Monomer.</text>
</comment>
<comment type="subcellular location">
    <subcellularLocation>
        <location evidence="1">Cytoplasm</location>
    </subcellularLocation>
</comment>
<comment type="similarity">
    <text evidence="1">Belongs to the QueA family.</text>
</comment>
<evidence type="ECO:0000255" key="1">
    <source>
        <dbReference type="HAMAP-Rule" id="MF_00113"/>
    </source>
</evidence>
<feature type="chain" id="PRO_1000076005" description="S-adenosylmethionine:tRNA ribosyltransferase-isomerase">
    <location>
        <begin position="1"/>
        <end position="338"/>
    </location>
</feature>
<name>QUEA_FRAP2</name>